<proteinExistence type="evidence at protein level"/>
<reference key="1">
    <citation type="journal article" date="1997" name="Biochemistry">
        <title>Crystal structure analysis of the activation of histidine by Thermus thermophilus histidyl-tRNA synthetase.</title>
        <authorList>
            <person name="Aaberg A."/>
            <person name="Yaremchuk A."/>
            <person name="Tukalo M."/>
            <person name="Rasmussen B."/>
            <person name="Cusack S."/>
        </authorList>
    </citation>
    <scope>NUCLEOTIDE SEQUENCE [GENOMIC DNA]</scope>
    <scope>X-RAY CRYSTALLOGRAPHY (2.7 ANGSTROMS)</scope>
</reference>
<reference key="2">
    <citation type="submission" date="2004-11" db="EMBL/GenBank/DDBJ databases">
        <title>Complete genome sequence of Thermus thermophilus HB8.</title>
        <authorList>
            <person name="Masui R."/>
            <person name="Kurokawa K."/>
            <person name="Nakagawa N."/>
            <person name="Tokunaga F."/>
            <person name="Koyama Y."/>
            <person name="Shibata T."/>
            <person name="Oshima T."/>
            <person name="Yokoyama S."/>
            <person name="Yasunaga T."/>
            <person name="Kuramitsu S."/>
        </authorList>
    </citation>
    <scope>NUCLEOTIDE SEQUENCE [LARGE SCALE GENOMIC DNA]</scope>
    <source>
        <strain>ATCC 27634 / DSM 579 / HB8</strain>
    </source>
</reference>
<sequence length="421" mass="47041">MTARAVRGTKDLFGKELRMHQRIVATARKVLEAAGALELVTPIFEETQVFEKGVGAATDIVRKEMFTFQDRGGRSLTLRPEGTAAMVRAYLEHGMKVWPQPVRLWMAGPMFRAERPQKGRYRQFHQVNYEALGSENPILDAEAVVLLYECLKELGLRRLKVKLSSVGDPEDRARYNAYLREVLSPHREALSEDSKERLELNPMRILDSKSERDQALLKELGVRPMLDFLGEEARAHLKEVERHLERLSVPYELEPALVRGLDYYVRTAFEVHHEEIGAQSALGGGGRYDGLSELLGGPRVPGVGFAFGVERVALALEAEGFGLPEEKGPDLYLIPLTEEAVAEAFYLAEALRPRLRAEYALAPRKPAKGLEEALKRGAAFAGFLGEDELRAGEVTLKRLATGEQVRLSREEVPGYLLQALG</sequence>
<name>SYH_THET8</name>
<organism>
    <name type="scientific">Thermus thermophilus (strain ATCC 27634 / DSM 579 / HB8)</name>
    <dbReference type="NCBI Taxonomy" id="300852"/>
    <lineage>
        <taxon>Bacteria</taxon>
        <taxon>Thermotogati</taxon>
        <taxon>Deinococcota</taxon>
        <taxon>Deinococci</taxon>
        <taxon>Thermales</taxon>
        <taxon>Thermaceae</taxon>
        <taxon>Thermus</taxon>
    </lineage>
</organism>
<comment type="catalytic activity">
    <reaction>
        <text>tRNA(His) + L-histidine + ATP = L-histidyl-tRNA(His) + AMP + diphosphate + H(+)</text>
        <dbReference type="Rhea" id="RHEA:17313"/>
        <dbReference type="Rhea" id="RHEA-COMP:9665"/>
        <dbReference type="Rhea" id="RHEA-COMP:9689"/>
        <dbReference type="ChEBI" id="CHEBI:15378"/>
        <dbReference type="ChEBI" id="CHEBI:30616"/>
        <dbReference type="ChEBI" id="CHEBI:33019"/>
        <dbReference type="ChEBI" id="CHEBI:57595"/>
        <dbReference type="ChEBI" id="CHEBI:78442"/>
        <dbReference type="ChEBI" id="CHEBI:78527"/>
        <dbReference type="ChEBI" id="CHEBI:456215"/>
        <dbReference type="EC" id="6.1.1.21"/>
    </reaction>
</comment>
<comment type="subunit">
    <text>Homodimer.</text>
</comment>
<comment type="subcellular location">
    <subcellularLocation>
        <location>Cytoplasm</location>
    </subcellularLocation>
</comment>
<comment type="similarity">
    <text evidence="1">Belongs to the class-II aminoacyl-tRNA synthetase family.</text>
</comment>
<gene>
    <name type="primary">hisS</name>
    <name type="ordered locus">TTHA0712</name>
</gene>
<dbReference type="EC" id="6.1.1.21"/>
<dbReference type="EMBL" id="AP008226">
    <property type="protein sequence ID" value="BAD70535.1"/>
    <property type="molecule type" value="Genomic_DNA"/>
</dbReference>
<dbReference type="RefSeq" id="WP_011172810.1">
    <property type="nucleotide sequence ID" value="NC_006461.1"/>
</dbReference>
<dbReference type="RefSeq" id="YP_143978.1">
    <property type="nucleotide sequence ID" value="NC_006461.1"/>
</dbReference>
<dbReference type="PDB" id="1ADJ">
    <property type="method" value="X-ray"/>
    <property type="resolution" value="2.70 A"/>
    <property type="chains" value="A/B/C/D=1-421"/>
</dbReference>
<dbReference type="PDB" id="1ADY">
    <property type="method" value="X-ray"/>
    <property type="resolution" value="2.80 A"/>
    <property type="chains" value="A/B/C/D=1-421"/>
</dbReference>
<dbReference type="PDBsum" id="1ADJ"/>
<dbReference type="PDBsum" id="1ADY"/>
<dbReference type="SMR" id="P56194"/>
<dbReference type="DrugBank" id="DB04201">
    <property type="generic name" value="Histidyl-Adenosine Monophosphate"/>
</dbReference>
<dbReference type="EnsemblBacteria" id="BAD70535">
    <property type="protein sequence ID" value="BAD70535"/>
    <property type="gene ID" value="BAD70535"/>
</dbReference>
<dbReference type="GeneID" id="3168691"/>
<dbReference type="KEGG" id="ttj:TTHA0712"/>
<dbReference type="PATRIC" id="fig|300852.9.peg.706"/>
<dbReference type="eggNOG" id="COG0124">
    <property type="taxonomic scope" value="Bacteria"/>
</dbReference>
<dbReference type="HOGENOM" id="CLU_025113_1_1_0"/>
<dbReference type="PhylomeDB" id="P56194"/>
<dbReference type="BRENDA" id="6.1.1.21">
    <property type="organism ID" value="2305"/>
</dbReference>
<dbReference type="EvolutionaryTrace" id="P56194"/>
<dbReference type="Proteomes" id="UP000000532">
    <property type="component" value="Chromosome"/>
</dbReference>
<dbReference type="GO" id="GO:0005737">
    <property type="term" value="C:cytoplasm"/>
    <property type="evidence" value="ECO:0007669"/>
    <property type="project" value="UniProtKB-SubCell"/>
</dbReference>
<dbReference type="GO" id="GO:0005524">
    <property type="term" value="F:ATP binding"/>
    <property type="evidence" value="ECO:0007669"/>
    <property type="project" value="UniProtKB-UniRule"/>
</dbReference>
<dbReference type="GO" id="GO:0004821">
    <property type="term" value="F:histidine-tRNA ligase activity"/>
    <property type="evidence" value="ECO:0007669"/>
    <property type="project" value="UniProtKB-UniRule"/>
</dbReference>
<dbReference type="GO" id="GO:0006427">
    <property type="term" value="P:histidyl-tRNA aminoacylation"/>
    <property type="evidence" value="ECO:0007669"/>
    <property type="project" value="UniProtKB-UniRule"/>
</dbReference>
<dbReference type="CDD" id="cd00773">
    <property type="entry name" value="HisRS-like_core"/>
    <property type="match status" value="1"/>
</dbReference>
<dbReference type="Gene3D" id="3.40.50.800">
    <property type="entry name" value="Anticodon-binding domain"/>
    <property type="match status" value="1"/>
</dbReference>
<dbReference type="Gene3D" id="3.30.930.10">
    <property type="entry name" value="Bira Bifunctional Protein, Domain 2"/>
    <property type="match status" value="1"/>
</dbReference>
<dbReference type="HAMAP" id="MF_00127">
    <property type="entry name" value="His_tRNA_synth"/>
    <property type="match status" value="1"/>
</dbReference>
<dbReference type="InterPro" id="IPR006195">
    <property type="entry name" value="aa-tRNA-synth_II"/>
</dbReference>
<dbReference type="InterPro" id="IPR045864">
    <property type="entry name" value="aa-tRNA-synth_II/BPL/LPL"/>
</dbReference>
<dbReference type="InterPro" id="IPR004154">
    <property type="entry name" value="Anticodon-bd"/>
</dbReference>
<dbReference type="InterPro" id="IPR036621">
    <property type="entry name" value="Anticodon-bd_dom_sf"/>
</dbReference>
<dbReference type="InterPro" id="IPR015807">
    <property type="entry name" value="His-tRNA-ligase"/>
</dbReference>
<dbReference type="InterPro" id="IPR041715">
    <property type="entry name" value="HisRS-like_core"/>
</dbReference>
<dbReference type="InterPro" id="IPR004516">
    <property type="entry name" value="HisRS/HisZ"/>
</dbReference>
<dbReference type="NCBIfam" id="TIGR00442">
    <property type="entry name" value="hisS"/>
    <property type="match status" value="1"/>
</dbReference>
<dbReference type="PANTHER" id="PTHR43707:SF1">
    <property type="entry name" value="HISTIDINE--TRNA LIGASE, MITOCHONDRIAL-RELATED"/>
    <property type="match status" value="1"/>
</dbReference>
<dbReference type="PANTHER" id="PTHR43707">
    <property type="entry name" value="HISTIDYL-TRNA SYNTHETASE"/>
    <property type="match status" value="1"/>
</dbReference>
<dbReference type="Pfam" id="PF03129">
    <property type="entry name" value="HGTP_anticodon"/>
    <property type="match status" value="1"/>
</dbReference>
<dbReference type="Pfam" id="PF13393">
    <property type="entry name" value="tRNA-synt_His"/>
    <property type="match status" value="1"/>
</dbReference>
<dbReference type="PIRSF" id="PIRSF001549">
    <property type="entry name" value="His-tRNA_synth"/>
    <property type="match status" value="1"/>
</dbReference>
<dbReference type="SUPFAM" id="SSF52954">
    <property type="entry name" value="Class II aaRS ABD-related"/>
    <property type="match status" value="1"/>
</dbReference>
<dbReference type="SUPFAM" id="SSF55681">
    <property type="entry name" value="Class II aaRS and biotin synthetases"/>
    <property type="match status" value="1"/>
</dbReference>
<dbReference type="PROSITE" id="PS50862">
    <property type="entry name" value="AA_TRNA_LIGASE_II"/>
    <property type="match status" value="1"/>
</dbReference>
<evidence type="ECO:0000305" key="1"/>
<evidence type="ECO:0007829" key="2">
    <source>
        <dbReference type="PDB" id="1ADJ"/>
    </source>
</evidence>
<feature type="chain" id="PRO_0000136284" description="Histidine--tRNA ligase">
    <location>
        <begin position="1"/>
        <end position="421"/>
    </location>
</feature>
<feature type="region of interest" description="Catalytic">
    <location>
        <begin position="1"/>
        <end position="171"/>
    </location>
</feature>
<feature type="region of interest" description="Catalytic">
    <location>
        <begin position="229"/>
        <end position="320"/>
    </location>
</feature>
<feature type="sequence conflict" description="In Ref. 1." evidence="1" ref="1">
    <original>L</original>
    <variation>E</variation>
    <location>
        <position position="200"/>
    </location>
</feature>
<feature type="helix" evidence="2">
    <location>
        <begin position="14"/>
        <end position="33"/>
    </location>
</feature>
<feature type="strand" evidence="2">
    <location>
        <begin position="37"/>
        <end position="40"/>
    </location>
</feature>
<feature type="strand" evidence="2">
    <location>
        <begin position="43"/>
        <end position="46"/>
    </location>
</feature>
<feature type="helix" evidence="2">
    <location>
        <begin position="47"/>
        <end position="54"/>
    </location>
</feature>
<feature type="helix" evidence="2">
    <location>
        <begin position="59"/>
        <end position="63"/>
    </location>
</feature>
<feature type="strand" evidence="2">
    <location>
        <begin position="67"/>
        <end position="69"/>
    </location>
</feature>
<feature type="strand" evidence="2">
    <location>
        <begin position="75"/>
        <end position="78"/>
    </location>
</feature>
<feature type="helix" evidence="2">
    <location>
        <begin position="83"/>
        <end position="92"/>
    </location>
</feature>
<feature type="helix" evidence="2">
    <location>
        <begin position="95"/>
        <end position="97"/>
    </location>
</feature>
<feature type="strand" evidence="2">
    <location>
        <begin position="98"/>
        <end position="111"/>
    </location>
</feature>
<feature type="strand" evidence="2">
    <location>
        <begin position="122"/>
        <end position="133"/>
    </location>
</feature>
<feature type="helix" evidence="2">
    <location>
        <begin position="137"/>
        <end position="153"/>
    </location>
</feature>
<feature type="strand" evidence="2">
    <location>
        <begin position="160"/>
        <end position="165"/>
    </location>
</feature>
<feature type="helix" evidence="2">
    <location>
        <begin position="169"/>
        <end position="183"/>
    </location>
</feature>
<feature type="helix" evidence="2">
    <location>
        <begin position="184"/>
        <end position="189"/>
    </location>
</feature>
<feature type="helix" evidence="2">
    <location>
        <begin position="192"/>
        <end position="197"/>
    </location>
</feature>
<feature type="helix" evidence="2">
    <location>
        <begin position="202"/>
        <end position="205"/>
    </location>
</feature>
<feature type="helix" evidence="2">
    <location>
        <begin position="211"/>
        <end position="220"/>
    </location>
</feature>
<feature type="helix" evidence="2">
    <location>
        <begin position="225"/>
        <end position="228"/>
    </location>
</feature>
<feature type="helix" evidence="2">
    <location>
        <begin position="231"/>
        <end position="246"/>
    </location>
</feature>
<feature type="strand" evidence="2">
    <location>
        <begin position="251"/>
        <end position="253"/>
    </location>
</feature>
<feature type="strand" evidence="2">
    <location>
        <begin position="266"/>
        <end position="272"/>
    </location>
</feature>
<feature type="strand" evidence="2">
    <location>
        <begin position="274"/>
        <end position="278"/>
    </location>
</feature>
<feature type="strand" evidence="2">
    <location>
        <begin position="281"/>
        <end position="287"/>
    </location>
</feature>
<feature type="helix" evidence="2">
    <location>
        <begin position="291"/>
        <end position="294"/>
    </location>
</feature>
<feature type="strand" evidence="2">
    <location>
        <begin position="302"/>
        <end position="308"/>
    </location>
</feature>
<feature type="helix" evidence="2">
    <location>
        <begin position="309"/>
        <end position="318"/>
    </location>
</feature>
<feature type="strand" evidence="2">
    <location>
        <begin position="330"/>
        <end position="337"/>
    </location>
</feature>
<feature type="helix" evidence="2">
    <location>
        <begin position="338"/>
        <end position="351"/>
    </location>
</feature>
<feature type="turn" evidence="2">
    <location>
        <begin position="352"/>
        <end position="354"/>
    </location>
</feature>
<feature type="strand" evidence="2">
    <location>
        <begin position="357"/>
        <end position="359"/>
    </location>
</feature>
<feature type="helix" evidence="2">
    <location>
        <begin position="366"/>
        <end position="375"/>
    </location>
</feature>
<feature type="strand" evidence="2">
    <location>
        <begin position="379"/>
        <end position="384"/>
    </location>
</feature>
<feature type="helix" evidence="2">
    <location>
        <begin position="386"/>
        <end position="391"/>
    </location>
</feature>
<feature type="strand" evidence="2">
    <location>
        <begin position="393"/>
        <end position="398"/>
    </location>
</feature>
<feature type="turn" evidence="2">
    <location>
        <begin position="399"/>
        <end position="401"/>
    </location>
</feature>
<feature type="strand" evidence="2">
    <location>
        <begin position="404"/>
        <end position="408"/>
    </location>
</feature>
<feature type="helix" evidence="2">
    <location>
        <begin position="411"/>
        <end position="420"/>
    </location>
</feature>
<protein>
    <recommendedName>
        <fullName>Histidine--tRNA ligase</fullName>
        <ecNumber>6.1.1.21</ecNumber>
    </recommendedName>
    <alternativeName>
        <fullName>Histidyl-tRNA synthetase</fullName>
        <shortName>HisRS</shortName>
    </alternativeName>
</protein>
<keyword id="KW-0002">3D-structure</keyword>
<keyword id="KW-0030">Aminoacyl-tRNA synthetase</keyword>
<keyword id="KW-0067">ATP-binding</keyword>
<keyword id="KW-0963">Cytoplasm</keyword>
<keyword id="KW-0436">Ligase</keyword>
<keyword id="KW-0547">Nucleotide-binding</keyword>
<keyword id="KW-0648">Protein biosynthesis</keyword>
<keyword id="KW-1185">Reference proteome</keyword>
<accession>P56194</accession>
<accession>Q5SKD1</accession>